<comment type="function">
    <text evidence="1">S-adenosyl-L-methionine-dependent methyltransferase that catalyzes the trimethylation of the amino group of the modified target histidine residue in translation elongation factor 2 (EF-2), to form an intermediate called diphthine. The three successive methylation reactions represent the second step of diphthamide biosynthesis.</text>
</comment>
<comment type="catalytic activity">
    <reaction evidence="1">
        <text>2-[(3S)-amino-3-carboxypropyl]-L-histidyl-[translation elongation factor 2] + 3 S-adenosyl-L-methionine = diphthine-[translation elongation factor 2] + 3 S-adenosyl-L-homocysteine + 3 H(+)</text>
        <dbReference type="Rhea" id="RHEA:36415"/>
        <dbReference type="Rhea" id="RHEA-COMP:9749"/>
        <dbReference type="Rhea" id="RHEA-COMP:10172"/>
        <dbReference type="ChEBI" id="CHEBI:15378"/>
        <dbReference type="ChEBI" id="CHEBI:57856"/>
        <dbReference type="ChEBI" id="CHEBI:59789"/>
        <dbReference type="ChEBI" id="CHEBI:73995"/>
        <dbReference type="ChEBI" id="CHEBI:82696"/>
        <dbReference type="EC" id="2.1.1.98"/>
    </reaction>
</comment>
<comment type="pathway">
    <text evidence="1">Protein modification; peptidyl-diphthamide biosynthesis.</text>
</comment>
<comment type="subunit">
    <text evidence="1">Homodimer.</text>
</comment>
<comment type="similarity">
    <text evidence="1">Belongs to the diphthine synthase family.</text>
</comment>
<reference key="1">
    <citation type="journal article" date="2009" name="BMC Genomics">
        <title>The complete genome sequence of Staphylothermus marinus reveals differences in sulfur metabolism among heterotrophic Crenarchaeota.</title>
        <authorList>
            <person name="Anderson I.J."/>
            <person name="Dharmarajan L."/>
            <person name="Rodriguez J."/>
            <person name="Hooper S."/>
            <person name="Porat I."/>
            <person name="Ulrich L.E."/>
            <person name="Elkins J.G."/>
            <person name="Mavromatis K."/>
            <person name="Sun H."/>
            <person name="Land M."/>
            <person name="Lapidus A."/>
            <person name="Lucas S."/>
            <person name="Barry K."/>
            <person name="Huber H."/>
            <person name="Zhulin I.B."/>
            <person name="Whitman W.B."/>
            <person name="Mukhopadhyay B."/>
            <person name="Woese C."/>
            <person name="Bristow J."/>
            <person name="Kyrpides N."/>
        </authorList>
    </citation>
    <scope>NUCLEOTIDE SEQUENCE [LARGE SCALE GENOMIC DNA]</scope>
    <source>
        <strain>ATCC 43588 / DSM 3639 / JCM 9404 / F1</strain>
    </source>
</reference>
<reference key="2">
    <citation type="journal article" date="2009" name="Stand. Genomic Sci.">
        <title>Complete genome sequence of Staphylothermus marinus Stetter and Fiala 1986 type strain F1.</title>
        <authorList>
            <person name="Anderson I.J."/>
            <person name="Sun H."/>
            <person name="Lapidus A."/>
            <person name="Copeland A."/>
            <person name="Glavina Del Rio T."/>
            <person name="Tice H."/>
            <person name="Dalin E."/>
            <person name="Lucas S."/>
            <person name="Barry K."/>
            <person name="Land M."/>
            <person name="Richardson P."/>
            <person name="Huber H."/>
            <person name="Kyrpides N.C."/>
        </authorList>
    </citation>
    <scope>NUCLEOTIDE SEQUENCE [LARGE SCALE GENOMIC DNA]</scope>
    <source>
        <strain>ATCC 43588 / DSM 3639 / JCM 9404 / F1</strain>
    </source>
</reference>
<name>DPHB_STAMF</name>
<sequence>MLYFIGLGLSIKHLTLEAIDALRDVEKIYVDTYTNIVPDFSLDKLVSLVGEEKEFVMAKREFLEGKNIHFIVEEASKKNIAILVPGDPFIATTHDAIRVEALRRGIKVKVINGLSIYSLAPSRTGLQAYKFGKTVTLVYPEYFKPYSTIETIYDNLDRNLHTLLLLDLKIEENKAMTIPEAVDILIDLDERGVLENIIGVGLAQLGSSMEKIVADRLADLKNYTYPPPPHSIIIVAKPHPIELDNLHYVCGLPEHIYRRYSVSKTYP</sequence>
<gene>
    <name evidence="1" type="primary">dphB</name>
    <name type="ordered locus">Smar_0509</name>
</gene>
<protein>
    <recommendedName>
        <fullName evidence="1">Diphthine synthase</fullName>
        <ecNumber evidence="1">2.1.1.98</ecNumber>
    </recommendedName>
    <alternativeName>
        <fullName evidence="1">Diphthamide biosynthesis methyltransferase</fullName>
    </alternativeName>
</protein>
<feature type="chain" id="PRO_1000064830" description="Diphthine synthase">
    <location>
        <begin position="1"/>
        <end position="267"/>
    </location>
</feature>
<feature type="binding site" evidence="1">
    <location>
        <position position="9"/>
    </location>
    <ligand>
        <name>S-adenosyl-L-methionine</name>
        <dbReference type="ChEBI" id="CHEBI:59789"/>
    </ligand>
</feature>
<feature type="binding site" evidence="1">
    <location>
        <position position="87"/>
    </location>
    <ligand>
        <name>S-adenosyl-L-methionine</name>
        <dbReference type="ChEBI" id="CHEBI:59789"/>
    </ligand>
</feature>
<feature type="binding site" evidence="1">
    <location>
        <position position="90"/>
    </location>
    <ligand>
        <name>S-adenosyl-L-methionine</name>
        <dbReference type="ChEBI" id="CHEBI:59789"/>
    </ligand>
</feature>
<feature type="binding site" evidence="1">
    <location>
        <begin position="115"/>
        <end position="116"/>
    </location>
    <ligand>
        <name>S-adenosyl-L-methionine</name>
        <dbReference type="ChEBI" id="CHEBI:59789"/>
    </ligand>
</feature>
<feature type="binding site" evidence="1">
    <location>
        <position position="166"/>
    </location>
    <ligand>
        <name>S-adenosyl-L-methionine</name>
        <dbReference type="ChEBI" id="CHEBI:59789"/>
    </ligand>
</feature>
<feature type="binding site" evidence="1">
    <location>
        <position position="205"/>
    </location>
    <ligand>
        <name>S-adenosyl-L-methionine</name>
        <dbReference type="ChEBI" id="CHEBI:59789"/>
    </ligand>
</feature>
<feature type="binding site" evidence="1">
    <location>
        <position position="230"/>
    </location>
    <ligand>
        <name>S-adenosyl-L-methionine</name>
        <dbReference type="ChEBI" id="CHEBI:59789"/>
    </ligand>
</feature>
<accession>A3DLV7</accession>
<keyword id="KW-0489">Methyltransferase</keyword>
<keyword id="KW-1185">Reference proteome</keyword>
<keyword id="KW-0949">S-adenosyl-L-methionine</keyword>
<keyword id="KW-0808">Transferase</keyword>
<dbReference type="EC" id="2.1.1.98" evidence="1"/>
<dbReference type="EMBL" id="CP000575">
    <property type="protein sequence ID" value="ABN69617.1"/>
    <property type="molecule type" value="Genomic_DNA"/>
</dbReference>
<dbReference type="RefSeq" id="WP_011838808.1">
    <property type="nucleotide sequence ID" value="NC_009033.1"/>
</dbReference>
<dbReference type="SMR" id="A3DLV7"/>
<dbReference type="STRING" id="399550.Smar_0509"/>
<dbReference type="GeneID" id="4907400"/>
<dbReference type="KEGG" id="smr:Smar_0509"/>
<dbReference type="eggNOG" id="arCOG04161">
    <property type="taxonomic scope" value="Archaea"/>
</dbReference>
<dbReference type="HOGENOM" id="CLU_066040_0_0_2"/>
<dbReference type="OrthoDB" id="39139at2157"/>
<dbReference type="UniPathway" id="UPA00559"/>
<dbReference type="Proteomes" id="UP000000254">
    <property type="component" value="Chromosome"/>
</dbReference>
<dbReference type="GO" id="GO:0004164">
    <property type="term" value="F:diphthine synthase activity"/>
    <property type="evidence" value="ECO:0007669"/>
    <property type="project" value="UniProtKB-UniRule"/>
</dbReference>
<dbReference type="GO" id="GO:0032259">
    <property type="term" value="P:methylation"/>
    <property type="evidence" value="ECO:0007669"/>
    <property type="project" value="UniProtKB-KW"/>
</dbReference>
<dbReference type="GO" id="GO:0017183">
    <property type="term" value="P:protein histidyl modification to diphthamide"/>
    <property type="evidence" value="ECO:0007669"/>
    <property type="project" value="UniProtKB-UniRule"/>
</dbReference>
<dbReference type="CDD" id="cd11647">
    <property type="entry name" value="DHP5_DphB"/>
    <property type="match status" value="1"/>
</dbReference>
<dbReference type="Gene3D" id="3.40.1010.10">
    <property type="entry name" value="Cobalt-precorrin-4 Transmethylase, Domain 1"/>
    <property type="match status" value="1"/>
</dbReference>
<dbReference type="Gene3D" id="3.30.950.10">
    <property type="entry name" value="Methyltransferase, Cobalt-precorrin-4 Transmethylase, Domain 2"/>
    <property type="match status" value="1"/>
</dbReference>
<dbReference type="HAMAP" id="MF_01084">
    <property type="entry name" value="Diphthine_synth"/>
    <property type="match status" value="1"/>
</dbReference>
<dbReference type="InterPro" id="IPR000878">
    <property type="entry name" value="4pyrrol_Mease"/>
</dbReference>
<dbReference type="InterPro" id="IPR035996">
    <property type="entry name" value="4pyrrol_Methylase_sf"/>
</dbReference>
<dbReference type="InterPro" id="IPR014777">
    <property type="entry name" value="4pyrrole_Mease_sub1"/>
</dbReference>
<dbReference type="InterPro" id="IPR014776">
    <property type="entry name" value="4pyrrole_Mease_sub2"/>
</dbReference>
<dbReference type="InterPro" id="IPR004551">
    <property type="entry name" value="Dphthn_synthase"/>
</dbReference>
<dbReference type="NCBIfam" id="TIGR00522">
    <property type="entry name" value="dph5"/>
    <property type="match status" value="1"/>
</dbReference>
<dbReference type="PANTHER" id="PTHR10882:SF0">
    <property type="entry name" value="DIPHTHINE METHYL ESTER SYNTHASE"/>
    <property type="match status" value="1"/>
</dbReference>
<dbReference type="PANTHER" id="PTHR10882">
    <property type="entry name" value="DIPHTHINE SYNTHASE"/>
    <property type="match status" value="1"/>
</dbReference>
<dbReference type="Pfam" id="PF00590">
    <property type="entry name" value="TP_methylase"/>
    <property type="match status" value="1"/>
</dbReference>
<dbReference type="PIRSF" id="PIRSF036432">
    <property type="entry name" value="Diphthine_synth"/>
    <property type="match status" value="1"/>
</dbReference>
<dbReference type="SUPFAM" id="SSF53790">
    <property type="entry name" value="Tetrapyrrole methylase"/>
    <property type="match status" value="1"/>
</dbReference>
<evidence type="ECO:0000255" key="1">
    <source>
        <dbReference type="HAMAP-Rule" id="MF_01084"/>
    </source>
</evidence>
<proteinExistence type="inferred from homology"/>
<organism>
    <name type="scientific">Staphylothermus marinus (strain ATCC 43588 / DSM 3639 / JCM 9404 / F1)</name>
    <dbReference type="NCBI Taxonomy" id="399550"/>
    <lineage>
        <taxon>Archaea</taxon>
        <taxon>Thermoproteota</taxon>
        <taxon>Thermoprotei</taxon>
        <taxon>Desulfurococcales</taxon>
        <taxon>Desulfurococcaceae</taxon>
        <taxon>Staphylothermus</taxon>
    </lineage>
</organism>